<protein>
    <recommendedName>
        <fullName evidence="2">L-lactate dehydrogenase 1</fullName>
        <shortName evidence="2">L-LDH 1</shortName>
        <ecNumber evidence="2">1.1.1.27</ecNumber>
    </recommendedName>
</protein>
<accession>Q2YV38</accession>
<feature type="chain" id="PRO_0000237557" description="L-lactate dehydrogenase 1">
    <location>
        <begin position="1"/>
        <end position="317"/>
    </location>
</feature>
<feature type="active site" description="Proton acceptor" evidence="2">
    <location>
        <position position="179"/>
    </location>
</feature>
<feature type="binding site" evidence="2">
    <location>
        <position position="17"/>
    </location>
    <ligand>
        <name>NAD(+)</name>
        <dbReference type="ChEBI" id="CHEBI:57540"/>
    </ligand>
</feature>
<feature type="binding site" evidence="2">
    <location>
        <position position="38"/>
    </location>
    <ligand>
        <name>NAD(+)</name>
        <dbReference type="ChEBI" id="CHEBI:57540"/>
    </ligand>
</feature>
<feature type="binding site" evidence="2">
    <location>
        <position position="43"/>
    </location>
    <ligand>
        <name>NAD(+)</name>
        <dbReference type="ChEBI" id="CHEBI:57540"/>
    </ligand>
</feature>
<feature type="binding site" evidence="2">
    <location>
        <position position="69"/>
    </location>
    <ligand>
        <name>NAD(+)</name>
        <dbReference type="ChEBI" id="CHEBI:57540"/>
    </ligand>
</feature>
<feature type="binding site" evidence="2">
    <location>
        <begin position="83"/>
        <end position="84"/>
    </location>
    <ligand>
        <name>NAD(+)</name>
        <dbReference type="ChEBI" id="CHEBI:57540"/>
    </ligand>
</feature>
<feature type="binding site" evidence="2">
    <location>
        <position position="86"/>
    </location>
    <ligand>
        <name>substrate</name>
    </ligand>
</feature>
<feature type="binding site" evidence="2">
    <location>
        <position position="92"/>
    </location>
    <ligand>
        <name>substrate</name>
    </ligand>
</feature>
<feature type="binding site" evidence="2">
    <location>
        <position position="105"/>
    </location>
    <ligand>
        <name>NAD(+)</name>
        <dbReference type="ChEBI" id="CHEBI:57540"/>
    </ligand>
</feature>
<feature type="binding site" evidence="2">
    <location>
        <begin position="122"/>
        <end position="124"/>
    </location>
    <ligand>
        <name>NAD(+)</name>
        <dbReference type="ChEBI" id="CHEBI:57540"/>
    </ligand>
</feature>
<feature type="binding site" evidence="2">
    <location>
        <begin position="124"/>
        <end position="127"/>
    </location>
    <ligand>
        <name>substrate</name>
    </ligand>
</feature>
<feature type="binding site" evidence="2">
    <location>
        <position position="147"/>
    </location>
    <ligand>
        <name>NAD(+)</name>
        <dbReference type="ChEBI" id="CHEBI:57540"/>
    </ligand>
</feature>
<feature type="binding site" evidence="2">
    <location>
        <begin position="152"/>
        <end position="155"/>
    </location>
    <ligand>
        <name>substrate</name>
    </ligand>
</feature>
<feature type="binding site" evidence="2">
    <location>
        <position position="232"/>
    </location>
    <ligand>
        <name>substrate</name>
    </ligand>
</feature>
<feature type="modified residue" description="Phosphotyrosine" evidence="2">
    <location>
        <position position="223"/>
    </location>
</feature>
<gene>
    <name evidence="2" type="primary">ldh1</name>
    <name type="ordered locus">SAB0180</name>
</gene>
<name>LDH1_STAAB</name>
<evidence type="ECO:0000250" key="1">
    <source>
        <dbReference type="UniProtKB" id="Q5HJD7"/>
    </source>
</evidence>
<evidence type="ECO:0000255" key="2">
    <source>
        <dbReference type="HAMAP-Rule" id="MF_00488"/>
    </source>
</evidence>
<evidence type="ECO:0000305" key="3"/>
<reference key="1">
    <citation type="journal article" date="2007" name="PLoS ONE">
        <title>Molecular correlates of host specialization in Staphylococcus aureus.</title>
        <authorList>
            <person name="Herron-Olson L."/>
            <person name="Fitzgerald J.R."/>
            <person name="Musser J.M."/>
            <person name="Kapur V."/>
        </authorList>
    </citation>
    <scope>NUCLEOTIDE SEQUENCE [LARGE SCALE GENOMIC DNA]</scope>
    <source>
        <strain>bovine RF122 / ET3-1</strain>
    </source>
</reference>
<sequence>MNKFKGNKVVLIGNGAVGSSYAFSLVNQSIVDELVIIDLDTEKVRGDVMDLKHATPYSPTTVRVKAGEYSDCHDADLVVICAGAAQKPGETRLDLVSKNLKIFKSIVGEVMASKFDGIFLVATNPVDILVYATWKFSGLPKERVIGSGTILDSARFRLLLSEAFDVAPRSVDAQIIGEHGDTELPVWSHANIAGQPLKTLLEQRPEGKAQIEQIFVQTRDAAYDIIQAKGATYYGVAMGLARITEAIFRNEDAVLTVSALLEGEYDEEDVYIGVPAVINRNGIRNVVEIPLNDEEQSKFAHSAKTLKDIMAEAEELK</sequence>
<keyword id="KW-0963">Cytoplasm</keyword>
<keyword id="KW-0520">NAD</keyword>
<keyword id="KW-0560">Oxidoreductase</keyword>
<keyword id="KW-0597">Phosphoprotein</keyword>
<keyword id="KW-0346">Stress response</keyword>
<organism>
    <name type="scientific">Staphylococcus aureus (strain bovine RF122 / ET3-1)</name>
    <dbReference type="NCBI Taxonomy" id="273036"/>
    <lineage>
        <taxon>Bacteria</taxon>
        <taxon>Bacillati</taxon>
        <taxon>Bacillota</taxon>
        <taxon>Bacilli</taxon>
        <taxon>Bacillales</taxon>
        <taxon>Staphylococcaceae</taxon>
        <taxon>Staphylococcus</taxon>
    </lineage>
</organism>
<dbReference type="EC" id="1.1.1.27" evidence="2"/>
<dbReference type="EMBL" id="AJ938182">
    <property type="protein sequence ID" value="CAI79868.1"/>
    <property type="molecule type" value="Genomic_DNA"/>
</dbReference>
<dbReference type="RefSeq" id="WP_001031890.1">
    <property type="nucleotide sequence ID" value="NC_007622.1"/>
</dbReference>
<dbReference type="SMR" id="Q2YV38"/>
<dbReference type="KEGG" id="sab:SAB0180"/>
<dbReference type="HOGENOM" id="CLU_045401_1_1_9"/>
<dbReference type="UniPathway" id="UPA00554">
    <property type="reaction ID" value="UER00611"/>
</dbReference>
<dbReference type="GO" id="GO:0005737">
    <property type="term" value="C:cytoplasm"/>
    <property type="evidence" value="ECO:0007669"/>
    <property type="project" value="UniProtKB-SubCell"/>
</dbReference>
<dbReference type="GO" id="GO:0004459">
    <property type="term" value="F:L-lactate dehydrogenase activity"/>
    <property type="evidence" value="ECO:0007669"/>
    <property type="project" value="UniProtKB-UniRule"/>
</dbReference>
<dbReference type="GO" id="GO:0006096">
    <property type="term" value="P:glycolytic process"/>
    <property type="evidence" value="ECO:0007669"/>
    <property type="project" value="UniProtKB-UniRule"/>
</dbReference>
<dbReference type="GO" id="GO:0006089">
    <property type="term" value="P:lactate metabolic process"/>
    <property type="evidence" value="ECO:0007669"/>
    <property type="project" value="TreeGrafter"/>
</dbReference>
<dbReference type="CDD" id="cd05291">
    <property type="entry name" value="HicDH_like"/>
    <property type="match status" value="1"/>
</dbReference>
<dbReference type="FunFam" id="3.40.50.720:FF:000018">
    <property type="entry name" value="Malate dehydrogenase"/>
    <property type="match status" value="1"/>
</dbReference>
<dbReference type="Gene3D" id="3.90.110.10">
    <property type="entry name" value="Lactate dehydrogenase/glycoside hydrolase, family 4, C-terminal"/>
    <property type="match status" value="1"/>
</dbReference>
<dbReference type="Gene3D" id="3.40.50.720">
    <property type="entry name" value="NAD(P)-binding Rossmann-like Domain"/>
    <property type="match status" value="1"/>
</dbReference>
<dbReference type="HAMAP" id="MF_00488">
    <property type="entry name" value="Lactate_dehydrog"/>
    <property type="match status" value="1"/>
</dbReference>
<dbReference type="InterPro" id="IPR001557">
    <property type="entry name" value="L-lactate/malate_DH"/>
</dbReference>
<dbReference type="InterPro" id="IPR011304">
    <property type="entry name" value="L-lactate_DH"/>
</dbReference>
<dbReference type="InterPro" id="IPR018177">
    <property type="entry name" value="L-lactate_DH_AS"/>
</dbReference>
<dbReference type="InterPro" id="IPR022383">
    <property type="entry name" value="Lactate/malate_DH_C"/>
</dbReference>
<dbReference type="InterPro" id="IPR001236">
    <property type="entry name" value="Lactate/malate_DH_N"/>
</dbReference>
<dbReference type="InterPro" id="IPR015955">
    <property type="entry name" value="Lactate_DH/Glyco_Ohase_4_C"/>
</dbReference>
<dbReference type="InterPro" id="IPR036291">
    <property type="entry name" value="NAD(P)-bd_dom_sf"/>
</dbReference>
<dbReference type="NCBIfam" id="TIGR01771">
    <property type="entry name" value="L-LDH-NAD"/>
    <property type="match status" value="1"/>
</dbReference>
<dbReference type="NCBIfam" id="NF000824">
    <property type="entry name" value="PRK00066.1"/>
    <property type="match status" value="1"/>
</dbReference>
<dbReference type="NCBIfam" id="NF004863">
    <property type="entry name" value="PRK06223.1"/>
    <property type="match status" value="1"/>
</dbReference>
<dbReference type="PANTHER" id="PTHR43128">
    <property type="entry name" value="L-2-HYDROXYCARBOXYLATE DEHYDROGENASE (NAD(P)(+))"/>
    <property type="match status" value="1"/>
</dbReference>
<dbReference type="PANTHER" id="PTHR43128:SF16">
    <property type="entry name" value="L-LACTATE DEHYDROGENASE"/>
    <property type="match status" value="1"/>
</dbReference>
<dbReference type="Pfam" id="PF02866">
    <property type="entry name" value="Ldh_1_C"/>
    <property type="match status" value="1"/>
</dbReference>
<dbReference type="Pfam" id="PF00056">
    <property type="entry name" value="Ldh_1_N"/>
    <property type="match status" value="1"/>
</dbReference>
<dbReference type="PIRSF" id="PIRSF000102">
    <property type="entry name" value="Lac_mal_DH"/>
    <property type="match status" value="1"/>
</dbReference>
<dbReference type="PRINTS" id="PR00086">
    <property type="entry name" value="LLDHDRGNASE"/>
</dbReference>
<dbReference type="SUPFAM" id="SSF56327">
    <property type="entry name" value="LDH C-terminal domain-like"/>
    <property type="match status" value="1"/>
</dbReference>
<dbReference type="SUPFAM" id="SSF51735">
    <property type="entry name" value="NAD(P)-binding Rossmann-fold domains"/>
    <property type="match status" value="1"/>
</dbReference>
<dbReference type="PROSITE" id="PS00064">
    <property type="entry name" value="L_LDH"/>
    <property type="match status" value="1"/>
</dbReference>
<comment type="function">
    <text evidence="1 2">Catalyzes the conversion of lactate to pyruvate (Potential). Appears to be the primary factor that allows S.aureus growth during nitrosative stress in both aerobically and anaerobically cultured cells (By similarity).</text>
</comment>
<comment type="catalytic activity">
    <reaction evidence="2">
        <text>(S)-lactate + NAD(+) = pyruvate + NADH + H(+)</text>
        <dbReference type="Rhea" id="RHEA:23444"/>
        <dbReference type="ChEBI" id="CHEBI:15361"/>
        <dbReference type="ChEBI" id="CHEBI:15378"/>
        <dbReference type="ChEBI" id="CHEBI:16651"/>
        <dbReference type="ChEBI" id="CHEBI:57540"/>
        <dbReference type="ChEBI" id="CHEBI:57945"/>
        <dbReference type="EC" id="1.1.1.27"/>
    </reaction>
</comment>
<comment type="pathway">
    <text evidence="2">Fermentation; pyruvate fermentation to lactate; (S)-lactate from pyruvate: step 1/1.</text>
</comment>
<comment type="subunit">
    <text evidence="2">Homotetramer.</text>
</comment>
<comment type="subcellular location">
    <subcellularLocation>
        <location evidence="2">Cytoplasm</location>
    </subcellularLocation>
</comment>
<comment type="similarity">
    <text evidence="2 3">Belongs to the LDH/MDH superfamily. LDH family.</text>
</comment>
<proteinExistence type="inferred from homology"/>